<reference evidence="8" key="1">
    <citation type="journal article" date="2020" name="PLoS Genet.">
        <title>Dramatically diverse Schizosaccharomyces pombe wtf meiotic drivers all display high gamete-killing efficiency.</title>
        <authorList>
            <person name="Bravo Nunez M.A."/>
            <person name="Sabbarini I.M."/>
            <person name="Eickbush M.T."/>
            <person name="Liang Y."/>
            <person name="Lange J.J."/>
            <person name="Kent A.M."/>
            <person name="Zanders S.E."/>
        </authorList>
    </citation>
    <scope>NUCLEOTIDE SEQUENCE [GENOMIC DNA]</scope>
    <scope>FUNCTION</scope>
    <scope>ALTERNATIVE INITIATION (ISOFORMS 1 AND 2)</scope>
</reference>
<comment type="function">
    <text evidence="5">Promotes unequal transmission of alleles from the parental zygote to progeny spores by acting as poison/antidote system where the poison and antidote proteins are produced from the same locus; the poison component is trans-acting and targets all spores within an ascus whereas the antidote component is spore-specific, leading to poisoning of all progeny that do not inherit the allele.</text>
</comment>
<comment type="function">
    <molecule>Isoform 1</molecule>
    <text evidence="1">Localizes isoform 2 to the vacuole thereby facilitating its degradation.</text>
</comment>
<comment type="function">
    <molecule>Isoform 2</molecule>
    <text evidence="1">Forms toxic aggregates that disrupt spore maturation.</text>
</comment>
<comment type="subunit">
    <text evidence="1 2">Homomer (By similarity). Forms protein aggregates (By similarity). The two isoforms can interact with each other and with themselves (By similarity). High sequence similarity is required for their interaction (By similarity).</text>
</comment>
<comment type="subcellular location">
    <molecule>Isoform 1</molecule>
    <subcellularLocation>
        <location evidence="1 3">Spore membrane</location>
        <topology evidence="3">Multi-pass membrane protein</topology>
    </subcellularLocation>
    <subcellularLocation>
        <location evidence="1 3">Vacuole membrane</location>
        <topology evidence="3">Multi-pass membrane protein</topology>
    </subcellularLocation>
    <text evidence="1">Contained within spores expressing the isoform and localizes isoform 2 to the vacuole.</text>
</comment>
<comment type="subcellular location">
    <molecule>Isoform 2</molecule>
    <subcellularLocation>
        <location evidence="1">Ascus epiplasm</location>
    </subcellularLocation>
    <subcellularLocation>
        <location evidence="1">Cytoplasm</location>
    </subcellularLocation>
    <subcellularLocation>
        <location evidence="1 3">Spore membrane</location>
        <topology evidence="3">Multi-pass membrane protein</topology>
    </subcellularLocation>
    <subcellularLocation>
        <location evidence="1 3">Vacuole membrane</location>
        <topology evidence="3">Multi-pass membrane protein</topology>
    </subcellularLocation>
    <subcellularLocation>
        <location evidence="1 3">Endoplasmic reticulum membrane</location>
        <topology evidence="3">Multi-pass membrane protein</topology>
    </subcellularLocation>
    <text evidence="1">Localizes in trans to all spores within an ascus. Localization to the spore vacuole is dependent on isoform 1.</text>
</comment>
<comment type="alternative products">
    <event type="alternative initiation"/>
    <isoform>
        <id>A0A482ARN9-1</id>
        <name>1</name>
        <name evidence="6">Antidote</name>
        <name evidence="7">Suppressor</name>
        <sequence type="displayed"/>
    </isoform>
    <isoform>
        <id>A0A482ARN9-2</id>
        <name>2</name>
        <name evidence="6">Poison</name>
        <sequence type="described" ref="VSP_060938"/>
    </isoform>
</comment>
<comment type="similarity">
    <text evidence="7">Belongs to the WTF family.</text>
</comment>
<accession>A0A482ARN9</accession>
<proteinExistence type="inferred from homology"/>
<keyword id="KW-0024">Alternative initiation</keyword>
<keyword id="KW-0963">Cytoplasm</keyword>
<keyword id="KW-0256">Endoplasmic reticulum</keyword>
<keyword id="KW-0472">Membrane</keyword>
<keyword id="KW-0800">Toxin</keyword>
<keyword id="KW-0812">Transmembrane</keyword>
<keyword id="KW-1133">Transmembrane helix</keyword>
<keyword id="KW-0926">Vacuole</keyword>
<gene>
    <name evidence="8" type="primary">wtf30</name>
</gene>
<protein>
    <recommendedName>
        <fullName evidence="6">Meiotic driver wtf30</fullName>
    </recommendedName>
</protein>
<dbReference type="EMBL" id="MH837454">
    <property type="protein sequence ID" value="QBL54516.1"/>
    <property type="molecule type" value="Genomic_DNA"/>
</dbReference>
<dbReference type="GO" id="GO:0072324">
    <property type="term" value="C:ascus epiplasm"/>
    <property type="evidence" value="ECO:0000305"/>
    <property type="project" value="UniProtKB"/>
</dbReference>
<dbReference type="GO" id="GO:0005737">
    <property type="term" value="C:cytoplasm"/>
    <property type="evidence" value="ECO:0000305"/>
    <property type="project" value="UniProtKB"/>
</dbReference>
<dbReference type="GO" id="GO:0005789">
    <property type="term" value="C:endoplasmic reticulum membrane"/>
    <property type="evidence" value="ECO:0007669"/>
    <property type="project" value="UniProtKB-SubCell"/>
</dbReference>
<dbReference type="GO" id="GO:0005774">
    <property type="term" value="C:vacuolar membrane"/>
    <property type="evidence" value="ECO:0007669"/>
    <property type="project" value="UniProtKB-SubCell"/>
</dbReference>
<dbReference type="GO" id="GO:0110134">
    <property type="term" value="P:meiotic drive"/>
    <property type="evidence" value="ECO:0000314"/>
    <property type="project" value="UniProtKB"/>
</dbReference>
<dbReference type="InterPro" id="IPR004982">
    <property type="entry name" value="WTF"/>
</dbReference>
<dbReference type="Pfam" id="PF03303">
    <property type="entry name" value="WTF"/>
    <property type="match status" value="1"/>
</dbReference>
<evidence type="ECO:0000250" key="1">
    <source>
        <dbReference type="UniProtKB" id="A0A218N034"/>
    </source>
</evidence>
<evidence type="ECO:0000250" key="2">
    <source>
        <dbReference type="UniProtKB" id="O74420"/>
    </source>
</evidence>
<evidence type="ECO:0000255" key="3"/>
<evidence type="ECO:0000256" key="4">
    <source>
        <dbReference type="SAM" id="MobiDB-lite"/>
    </source>
</evidence>
<evidence type="ECO:0000269" key="5">
    <source>
    </source>
</evidence>
<evidence type="ECO:0000303" key="6">
    <source>
    </source>
</evidence>
<evidence type="ECO:0000305" key="7"/>
<evidence type="ECO:0000312" key="8">
    <source>
        <dbReference type="EMBL" id="QBL54516.1"/>
    </source>
</evidence>
<name>WTF30_SCHKA</name>
<sequence length="350" mass="39386">MKNKYYPLRSSIDELSTKNDNEIDLEKGPLPEYNSEDGSTLPPYSENLKLKDPKQMGANNPNLFNTDESTTPPDYGEDSLSHRENHSSGTTDNSSPFLIKLLISFIPIFVLNVPAVCYLTYKDALFKDYGKDEWVYFGMWCASCLMIFISLWCFYETWTQAVAQCVKVTAISLAKCVKVISIGLFNIRREMMIIIWILWLIICCILFVYIKSGDLNLNKALIYSTCTISAVLLLIVSSVCIPFWTFERTLAKLAKVFLLQSGIVLVLNGTMFLRGKHFEWTGCEIEASVLFIMGNVLFLCEMECPGALRRMPKSIRNGIASFLGGIANAIRGANDNNDIPLGEMDVESEV</sequence>
<organism evidence="8">
    <name type="scientific">Schizosaccharomyces kambucha</name>
    <name type="common">Fission yeast</name>
    <dbReference type="NCBI Taxonomy" id="204045"/>
    <lineage>
        <taxon>Eukaryota</taxon>
        <taxon>Fungi</taxon>
        <taxon>Dikarya</taxon>
        <taxon>Ascomycota</taxon>
        <taxon>Taphrinomycotina</taxon>
        <taxon>Schizosaccharomycetes</taxon>
        <taxon>Schizosaccharomycetales</taxon>
        <taxon>Schizosaccharomycetaceae</taxon>
        <taxon>Schizosaccharomyces</taxon>
    </lineage>
</organism>
<feature type="chain" id="PRO_0000452270" description="Meiotic driver wtf30">
    <location>
        <begin position="1"/>
        <end position="350"/>
    </location>
</feature>
<feature type="transmembrane region" description="Helical" evidence="3">
    <location>
        <begin position="97"/>
        <end position="117"/>
    </location>
</feature>
<feature type="transmembrane region" description="Helical" evidence="3">
    <location>
        <begin position="134"/>
        <end position="154"/>
    </location>
</feature>
<feature type="transmembrane region" description="Helical" evidence="3">
    <location>
        <begin position="165"/>
        <end position="185"/>
    </location>
</feature>
<feature type="transmembrane region" description="Helical" evidence="3">
    <location>
        <begin position="190"/>
        <end position="210"/>
    </location>
</feature>
<feature type="transmembrane region" description="Helical" evidence="3">
    <location>
        <begin position="226"/>
        <end position="246"/>
    </location>
</feature>
<feature type="transmembrane region" description="Helical" evidence="3">
    <location>
        <begin position="253"/>
        <end position="273"/>
    </location>
</feature>
<feature type="transmembrane region" description="Helical" evidence="3">
    <location>
        <begin position="280"/>
        <end position="300"/>
    </location>
</feature>
<feature type="region of interest" description="Disordered" evidence="4">
    <location>
        <begin position="1"/>
        <end position="92"/>
    </location>
</feature>
<feature type="compositionally biased region" description="Basic and acidic residues" evidence="4">
    <location>
        <begin position="11"/>
        <end position="29"/>
    </location>
</feature>
<feature type="compositionally biased region" description="Polar residues" evidence="4">
    <location>
        <begin position="57"/>
        <end position="72"/>
    </location>
</feature>
<feature type="splice variant" id="VSP_060938" description="In isoform 2." evidence="5">
    <location>
        <begin position="1"/>
        <end position="55"/>
    </location>
</feature>